<evidence type="ECO:0000250" key="1"/>
<evidence type="ECO:0000256" key="2">
    <source>
        <dbReference type="SAM" id="MobiDB-lite"/>
    </source>
</evidence>
<evidence type="ECO:0000269" key="3">
    <source>
    </source>
</evidence>
<evidence type="ECO:0000269" key="4">
    <source>
    </source>
</evidence>
<evidence type="ECO:0000269" key="5">
    <source>
    </source>
</evidence>
<evidence type="ECO:0000269" key="6">
    <source>
    </source>
</evidence>
<evidence type="ECO:0000269" key="7">
    <source>
    </source>
</evidence>
<evidence type="ECO:0000269" key="8">
    <source>
    </source>
</evidence>
<evidence type="ECO:0000269" key="9">
    <source>
    </source>
</evidence>
<evidence type="ECO:0000303" key="10">
    <source>
    </source>
</evidence>
<evidence type="ECO:0000305" key="11"/>
<evidence type="ECO:0000305" key="12">
    <source>
    </source>
</evidence>
<gene>
    <name type="primary">PP7</name>
    <name type="ordered locus">At5g63870</name>
    <name type="ORF">MGI19.7</name>
</gene>
<dbReference type="EC" id="3.1.3.16"/>
<dbReference type="EMBL" id="AJ000057">
    <property type="protein sequence ID" value="CAA03886.1"/>
    <property type="molecule type" value="mRNA"/>
</dbReference>
<dbReference type="EMBL" id="AB007646">
    <property type="protein sequence ID" value="BAB11035.1"/>
    <property type="molecule type" value="Genomic_DNA"/>
</dbReference>
<dbReference type="EMBL" id="CP002688">
    <property type="protein sequence ID" value="AED97806.1"/>
    <property type="molecule type" value="Genomic_DNA"/>
</dbReference>
<dbReference type="EMBL" id="CP002688">
    <property type="protein sequence ID" value="AED97807.1"/>
    <property type="molecule type" value="Genomic_DNA"/>
</dbReference>
<dbReference type="EMBL" id="CP002688">
    <property type="protein sequence ID" value="AED97808.1"/>
    <property type="molecule type" value="Genomic_DNA"/>
</dbReference>
<dbReference type="EMBL" id="AY050898">
    <property type="status" value="NOT_ANNOTATED_CDS"/>
    <property type="molecule type" value="mRNA"/>
</dbReference>
<dbReference type="PIR" id="T51611">
    <property type="entry name" value="T51611"/>
</dbReference>
<dbReference type="RefSeq" id="NP_568979.1">
    <molecule id="Q9FN02-2"/>
    <property type="nucleotide sequence ID" value="NM_125782.3"/>
</dbReference>
<dbReference type="RefSeq" id="NP_851258.2">
    <molecule id="Q9FN02-1"/>
    <property type="nucleotide sequence ID" value="NM_180927.4"/>
</dbReference>
<dbReference type="RefSeq" id="NP_851259.1">
    <molecule id="Q9FN02-1"/>
    <property type="nucleotide sequence ID" value="NM_180928.2"/>
</dbReference>
<dbReference type="SMR" id="Q9FN02"/>
<dbReference type="BioGRID" id="21749">
    <property type="interactions" value="5"/>
</dbReference>
<dbReference type="FunCoup" id="Q9FN02">
    <property type="interactions" value="697"/>
</dbReference>
<dbReference type="IntAct" id="Q9FN02">
    <property type="interactions" value="1"/>
</dbReference>
<dbReference type="MINT" id="Q9FN02"/>
<dbReference type="STRING" id="3702.Q9FN02"/>
<dbReference type="iPTMnet" id="Q9FN02"/>
<dbReference type="PaxDb" id="3702-AT5G63870.2"/>
<dbReference type="ProteomicsDB" id="226292">
    <molecule id="Q9FN02-1"/>
</dbReference>
<dbReference type="EnsemblPlants" id="AT5G63870.1">
    <molecule id="Q9FN02-1"/>
    <property type="protein sequence ID" value="AT5G63870.1"/>
    <property type="gene ID" value="AT5G63870"/>
</dbReference>
<dbReference type="EnsemblPlants" id="AT5G63870.2">
    <molecule id="Q9FN02-1"/>
    <property type="protein sequence ID" value="AT5G63870.2"/>
    <property type="gene ID" value="AT5G63870"/>
</dbReference>
<dbReference type="EnsemblPlants" id="AT5G63870.3">
    <molecule id="Q9FN02-2"/>
    <property type="protein sequence ID" value="AT5G63870.3"/>
    <property type="gene ID" value="AT5G63870"/>
</dbReference>
<dbReference type="GeneID" id="836507"/>
<dbReference type="Gramene" id="AT5G63870.1">
    <molecule id="Q9FN02-1"/>
    <property type="protein sequence ID" value="AT5G63870.1"/>
    <property type="gene ID" value="AT5G63870"/>
</dbReference>
<dbReference type="Gramene" id="AT5G63870.2">
    <molecule id="Q9FN02-1"/>
    <property type="protein sequence ID" value="AT5G63870.2"/>
    <property type="gene ID" value="AT5G63870"/>
</dbReference>
<dbReference type="Gramene" id="AT5G63870.3">
    <molecule id="Q9FN02-2"/>
    <property type="protein sequence ID" value="AT5G63870.3"/>
    <property type="gene ID" value="AT5G63870"/>
</dbReference>
<dbReference type="KEGG" id="ath:AT5G63870"/>
<dbReference type="Araport" id="AT5G63870"/>
<dbReference type="TAIR" id="AT5G63870">
    <property type="gene designation" value="PP7"/>
</dbReference>
<dbReference type="eggNOG" id="KOG0376">
    <property type="taxonomic scope" value="Eukaryota"/>
</dbReference>
<dbReference type="HOGENOM" id="CLU_004962_1_1_1"/>
<dbReference type="InParanoid" id="Q9FN02"/>
<dbReference type="OMA" id="DPPWEGQ"/>
<dbReference type="OrthoDB" id="445564at2759"/>
<dbReference type="PhylomeDB" id="Q9FN02"/>
<dbReference type="BRENDA" id="3.1.3.16">
    <property type="organism ID" value="399"/>
</dbReference>
<dbReference type="PRO" id="PR:Q9FN02"/>
<dbReference type="Proteomes" id="UP000006548">
    <property type="component" value="Chromosome 5"/>
</dbReference>
<dbReference type="ExpressionAtlas" id="Q9FN02">
    <property type="expression patterns" value="baseline and differential"/>
</dbReference>
<dbReference type="GO" id="GO:0005654">
    <property type="term" value="C:nucleoplasm"/>
    <property type="evidence" value="ECO:0007669"/>
    <property type="project" value="UniProtKB-SubCell"/>
</dbReference>
<dbReference type="GO" id="GO:0005634">
    <property type="term" value="C:nucleus"/>
    <property type="evidence" value="ECO:0000314"/>
    <property type="project" value="TAIR"/>
</dbReference>
<dbReference type="GO" id="GO:0046872">
    <property type="term" value="F:metal ion binding"/>
    <property type="evidence" value="ECO:0007669"/>
    <property type="project" value="UniProtKB-KW"/>
</dbReference>
<dbReference type="GO" id="GO:0004722">
    <property type="term" value="F:protein serine/threonine phosphatase activity"/>
    <property type="evidence" value="ECO:0000314"/>
    <property type="project" value="TAIR"/>
</dbReference>
<dbReference type="GO" id="GO:0009785">
    <property type="term" value="P:blue light signaling pathway"/>
    <property type="evidence" value="ECO:0000315"/>
    <property type="project" value="TAIR"/>
</dbReference>
<dbReference type="GO" id="GO:0009585">
    <property type="term" value="P:red, far-red light phototransduction"/>
    <property type="evidence" value="ECO:0000315"/>
    <property type="project" value="TAIR"/>
</dbReference>
<dbReference type="GO" id="GO:0009408">
    <property type="term" value="P:response to heat"/>
    <property type="evidence" value="ECO:0000315"/>
    <property type="project" value="UniProtKB"/>
</dbReference>
<dbReference type="CDD" id="cd07418">
    <property type="entry name" value="MPP_PP7"/>
    <property type="match status" value="1"/>
</dbReference>
<dbReference type="FunFam" id="3.60.21.10:FF:000064">
    <property type="entry name" value="Serine/threonine-protein phosphatase"/>
    <property type="match status" value="1"/>
</dbReference>
<dbReference type="Gene3D" id="3.60.21.10">
    <property type="match status" value="1"/>
</dbReference>
<dbReference type="InterPro" id="IPR004843">
    <property type="entry name" value="Calcineurin-like_PHP_ApaH"/>
</dbReference>
<dbReference type="InterPro" id="IPR029052">
    <property type="entry name" value="Metallo-depent_PP-like"/>
</dbReference>
<dbReference type="InterPro" id="IPR041754">
    <property type="entry name" value="MPP_PP7"/>
</dbReference>
<dbReference type="InterPro" id="IPR051134">
    <property type="entry name" value="PPP_phosphatase"/>
</dbReference>
<dbReference type="InterPro" id="IPR006186">
    <property type="entry name" value="Ser/Thr-sp_prot-phosphatase"/>
</dbReference>
<dbReference type="PANTHER" id="PTHR45668">
    <property type="entry name" value="SERINE/THREONINE-PROTEIN PHOSPHATASE 5-RELATED"/>
    <property type="match status" value="1"/>
</dbReference>
<dbReference type="PANTHER" id="PTHR45668:SF9">
    <property type="entry name" value="SERINE_THREONINE-PROTEIN PHOSPHATASE 7"/>
    <property type="match status" value="1"/>
</dbReference>
<dbReference type="Pfam" id="PF00149">
    <property type="entry name" value="Metallophos"/>
    <property type="match status" value="1"/>
</dbReference>
<dbReference type="PRINTS" id="PR00114">
    <property type="entry name" value="STPHPHTASE"/>
</dbReference>
<dbReference type="SMART" id="SM00156">
    <property type="entry name" value="PP2Ac"/>
    <property type="match status" value="1"/>
</dbReference>
<dbReference type="SUPFAM" id="SSF56300">
    <property type="entry name" value="Metallo-dependent phosphatases"/>
    <property type="match status" value="1"/>
</dbReference>
<dbReference type="PROSITE" id="PS00125">
    <property type="entry name" value="SER_THR_PHOSPHATASE"/>
    <property type="match status" value="1"/>
</dbReference>
<protein>
    <recommendedName>
        <fullName>Serine/threonine-protein phosphatase 7</fullName>
        <ecNumber>3.1.3.16</ecNumber>
    </recommendedName>
</protein>
<comment type="function">
    <text evidence="7 8 9">Phosphatase active on para-nitrophenylphosphate (pNPP) and on various phosphoproteins such as myelin basic protein. Seems to act as a positive regulator of cryptochrome signaling involved in hypocotyl growth inhibition and cotyledon expansion under white and blue light conditions. Confers thermotolerance. Required for heat shock mediated-signaling pathway that leads to the expression of heat shock proteins (HSPs).</text>
</comment>
<comment type="catalytic activity">
    <reaction>
        <text>O-phospho-L-seryl-[protein] + H2O = L-seryl-[protein] + phosphate</text>
        <dbReference type="Rhea" id="RHEA:20629"/>
        <dbReference type="Rhea" id="RHEA-COMP:9863"/>
        <dbReference type="Rhea" id="RHEA-COMP:11604"/>
        <dbReference type="ChEBI" id="CHEBI:15377"/>
        <dbReference type="ChEBI" id="CHEBI:29999"/>
        <dbReference type="ChEBI" id="CHEBI:43474"/>
        <dbReference type="ChEBI" id="CHEBI:83421"/>
        <dbReference type="EC" id="3.1.3.16"/>
    </reaction>
</comment>
<comment type="catalytic activity">
    <reaction>
        <text>O-phospho-L-threonyl-[protein] + H2O = L-threonyl-[protein] + phosphate</text>
        <dbReference type="Rhea" id="RHEA:47004"/>
        <dbReference type="Rhea" id="RHEA-COMP:11060"/>
        <dbReference type="Rhea" id="RHEA-COMP:11605"/>
        <dbReference type="ChEBI" id="CHEBI:15377"/>
        <dbReference type="ChEBI" id="CHEBI:30013"/>
        <dbReference type="ChEBI" id="CHEBI:43474"/>
        <dbReference type="ChEBI" id="CHEBI:61977"/>
        <dbReference type="EC" id="3.1.3.16"/>
    </reaction>
</comment>
<comment type="cofactor">
    <cofactor evidence="9">
        <name>Mn(2+)</name>
        <dbReference type="ChEBI" id="CHEBI:29035"/>
    </cofactor>
    <text evidence="9">Binds 2 manganese ions per subunit.</text>
</comment>
<comment type="activity regulation">
    <text evidence="5">Inhibited by NaF and orthovanadate, as well as by divalent cations such as Ni(2+) and Zn(2+). Inhibited by polylysine with myelin basic protein as substrate, but activated by polylysine with pNPP as substrate. Reversibly regulated by redox agents. Inhibited by submillimolar Pi concentrations. Slightly repressed by calmodulin (CaM).</text>
</comment>
<comment type="biophysicochemical properties">
    <kinetics>
        <KM evidence="3 9">1.7 mM for pNPP (at pH 7.8 and 25 degrees Celsius)</KM>
    </kinetics>
    <phDependence>
        <text evidence="3 9">Optimum pH is around 7.</text>
    </phDependence>
</comment>
<comment type="subunit">
    <text evidence="5 6 8">Monomer, homodimer, and heteromer. Interacts with calmodulin (CaM3 and CaM4) and HSFA1A/HSF1.</text>
</comment>
<comment type="subcellular location">
    <subcellularLocation>
        <location evidence="4">Nucleus</location>
        <location evidence="4">Nucleoplasm</location>
    </subcellularLocation>
</comment>
<comment type="alternative products">
    <event type="alternative splicing"/>
    <isoform>
        <id>Q9FN02-1</id>
        <name>1</name>
        <sequence type="displayed"/>
    </isoform>
    <isoform>
        <id>Q9FN02-2</id>
        <name>2</name>
        <sequence type="described" ref="VSP_029088 VSP_029089"/>
    </isoform>
</comment>
<comment type="tissue specificity">
    <text evidence="7">Expressed in leaves, and, to a lower extent, in stems and flowers.</text>
</comment>
<comment type="induction">
    <text evidence="8">By heat shock.</text>
</comment>
<comment type="miscellaneous">
    <molecule>Isoform 2</molecule>
    <text evidence="11">May be due to an intron retention.</text>
</comment>
<comment type="similarity">
    <text evidence="11">Belongs to the PPP phosphatase family. PP-7 subfamily.</text>
</comment>
<keyword id="KW-0025">Alternative splicing</keyword>
<keyword id="KW-1015">Disulfide bond</keyword>
<keyword id="KW-0378">Hydrolase</keyword>
<keyword id="KW-0464">Manganese</keyword>
<keyword id="KW-0479">Metal-binding</keyword>
<keyword id="KW-0539">Nucleus</keyword>
<keyword id="KW-0904">Protein phosphatase</keyword>
<keyword id="KW-1185">Reference proteome</keyword>
<name>PPP7_ARATH</name>
<organism>
    <name type="scientific">Arabidopsis thaliana</name>
    <name type="common">Mouse-ear cress</name>
    <dbReference type="NCBI Taxonomy" id="3702"/>
    <lineage>
        <taxon>Eukaryota</taxon>
        <taxon>Viridiplantae</taxon>
        <taxon>Streptophyta</taxon>
        <taxon>Embryophyta</taxon>
        <taxon>Tracheophyta</taxon>
        <taxon>Spermatophyta</taxon>
        <taxon>Magnoliopsida</taxon>
        <taxon>eudicotyledons</taxon>
        <taxon>Gunneridae</taxon>
        <taxon>Pentapetalae</taxon>
        <taxon>rosids</taxon>
        <taxon>malvids</taxon>
        <taxon>Brassicales</taxon>
        <taxon>Brassicaceae</taxon>
        <taxon>Camelineae</taxon>
        <taxon>Arabidopsis</taxon>
    </lineage>
</organism>
<reference key="1">
    <citation type="journal article" date="1998" name="Biochem. Mol. Biol. Int.">
        <title>PP7, a plant phosphatase representing a novel evolutionary branch of eukaryotic protein Ser/Thr phosphatases.</title>
        <authorList>
            <person name="Andreeva A.V."/>
            <person name="Evans D.E."/>
            <person name="Hawes C.R."/>
            <person name="Bennett N."/>
            <person name="Kutuzov M.A."/>
        </authorList>
    </citation>
    <scope>NUCLEOTIDE SEQUENCE [MRNA] (ISOFORM 1)</scope>
    <source>
        <strain>cv. Columbia</strain>
    </source>
</reference>
<reference key="2">
    <citation type="journal article" date="1997" name="DNA Res.">
        <title>Structural analysis of Arabidopsis thaliana chromosome 5. III. Sequence features of the regions of 1,191,918 bp covered by seventeen physically assigned P1 clones.</title>
        <authorList>
            <person name="Nakamura Y."/>
            <person name="Sato S."/>
            <person name="Kaneko T."/>
            <person name="Kotani H."/>
            <person name="Asamizu E."/>
            <person name="Miyajima N."/>
            <person name="Tabata S."/>
        </authorList>
    </citation>
    <scope>NUCLEOTIDE SEQUENCE [LARGE SCALE GENOMIC DNA]</scope>
    <source>
        <strain>cv. Columbia</strain>
    </source>
</reference>
<reference key="3">
    <citation type="journal article" date="2017" name="Plant J.">
        <title>Araport11: a complete reannotation of the Arabidopsis thaliana reference genome.</title>
        <authorList>
            <person name="Cheng C.Y."/>
            <person name="Krishnakumar V."/>
            <person name="Chan A.P."/>
            <person name="Thibaud-Nissen F."/>
            <person name="Schobel S."/>
            <person name="Town C.D."/>
        </authorList>
    </citation>
    <scope>GENOME REANNOTATION</scope>
    <source>
        <strain>cv. Columbia</strain>
    </source>
</reference>
<reference key="4">
    <citation type="journal article" date="2003" name="Science">
        <title>Empirical analysis of transcriptional activity in the Arabidopsis genome.</title>
        <authorList>
            <person name="Yamada K."/>
            <person name="Lim J."/>
            <person name="Dale J.M."/>
            <person name="Chen H."/>
            <person name="Shinn P."/>
            <person name="Palm C.J."/>
            <person name="Southwick A.M."/>
            <person name="Wu H.C."/>
            <person name="Kim C.J."/>
            <person name="Nguyen M."/>
            <person name="Pham P.K."/>
            <person name="Cheuk R.F."/>
            <person name="Karlin-Newmann G."/>
            <person name="Liu S.X."/>
            <person name="Lam B."/>
            <person name="Sakano H."/>
            <person name="Wu T."/>
            <person name="Yu G."/>
            <person name="Miranda M."/>
            <person name="Quach H.L."/>
            <person name="Tripp M."/>
            <person name="Chang C.H."/>
            <person name="Lee J.M."/>
            <person name="Toriumi M.J."/>
            <person name="Chan M.M."/>
            <person name="Tang C.C."/>
            <person name="Onodera C.S."/>
            <person name="Deng J.M."/>
            <person name="Akiyama K."/>
            <person name="Ansari Y."/>
            <person name="Arakawa T."/>
            <person name="Banh J."/>
            <person name="Banno F."/>
            <person name="Bowser L."/>
            <person name="Brooks S.Y."/>
            <person name="Carninci P."/>
            <person name="Chao Q."/>
            <person name="Choy N."/>
            <person name="Enju A."/>
            <person name="Goldsmith A.D."/>
            <person name="Gurjal M."/>
            <person name="Hansen N.F."/>
            <person name="Hayashizaki Y."/>
            <person name="Johnson-Hopson C."/>
            <person name="Hsuan V.W."/>
            <person name="Iida K."/>
            <person name="Karnes M."/>
            <person name="Khan S."/>
            <person name="Koesema E."/>
            <person name="Ishida J."/>
            <person name="Jiang P.X."/>
            <person name="Jones T."/>
            <person name="Kawai J."/>
            <person name="Kamiya A."/>
            <person name="Meyers C."/>
            <person name="Nakajima M."/>
            <person name="Narusaka M."/>
            <person name="Seki M."/>
            <person name="Sakurai T."/>
            <person name="Satou M."/>
            <person name="Tamse R."/>
            <person name="Vaysberg M."/>
            <person name="Wallender E.K."/>
            <person name="Wong C."/>
            <person name="Yamamura Y."/>
            <person name="Yuan S."/>
            <person name="Shinozaki K."/>
            <person name="Davis R.W."/>
            <person name="Theologis A."/>
            <person name="Ecker J.R."/>
        </authorList>
    </citation>
    <scope>NUCLEOTIDE SEQUENCE [LARGE SCALE MRNA] (ISOFORM 2)</scope>
    <source>
        <strain>cv. Columbia</strain>
    </source>
</reference>
<reference key="5">
    <citation type="journal article" date="1998" name="FEBS Lett.">
        <title>Expression and characterization of PP7, a novel plant protein Ser/Thr phosphatase distantly related to RdgC/PPEF and PP5.</title>
        <authorList>
            <person name="Kutuzov M.A."/>
            <person name="Evans D.E."/>
            <person name="Andreeva A.V."/>
        </authorList>
    </citation>
    <scope>FUNCTION</scope>
    <scope>BIOPHYSICOCHEMICAL PROPERTIES</scope>
    <scope>INHIBITION</scope>
    <scope>DISULFIDE BOND</scope>
    <scope>COFACTOR</scope>
</reference>
<reference key="6">
    <citation type="journal article" date="2001" name="Arch. Biochem. Biophys.">
        <title>Purification of plant protein phosphatase PP7 and evidence for its redox regulation.</title>
        <authorList>
            <person name="Andreeva A.V."/>
            <person name="Solov'eva O.V."/>
            <person name="Kakuev D.L."/>
            <person name="Kutuzov M.A."/>
        </authorList>
    </citation>
    <scope>ACTIVITY REGULATION</scope>
    <scope>SUBUNIT</scope>
</reference>
<reference key="7">
    <citation type="journal article" date="2001" name="Biochem. Biophys. Res. Commun.">
        <title>Noncompetitive inhibition of plant protein Ser/Thr phosphatase PP7 by phosphate.</title>
        <authorList>
            <person name="Kutuzov M.A."/>
            <person name="Andreeva A.V."/>
        </authorList>
    </citation>
    <scope>BIOPHYSICOCHEMICAL PROPERTIES</scope>
    <scope>INHIBITION BY INORGANIC PHOSPHATE</scope>
</reference>
<reference key="8">
    <citation type="journal article" date="2001" name="Biochem. Biophys. Res. Commun.">
        <title>Interaction of plant protein Ser/Thr phosphatase PP7 with calmodulin.</title>
        <authorList>
            <person name="Kutuzov M.A."/>
            <person name="Bennett N."/>
            <person name="Andreeva A.V."/>
        </authorList>
    </citation>
    <scope>INTERACTION WITH CALMODULIN</scope>
    <scope>MUTAGENESIS OF 209-ARG--LEU-231 AND 369-PRO--SER-413</scope>
</reference>
<reference key="9">
    <citation type="journal article" date="2001" name="Mol. Cell Biol. Res. Commun.">
        <title>Nuclear localization of the plant protein Ser/Thr phosphatase PP7.</title>
        <authorList>
            <person name="Andreeva A.V."/>
            <person name="Kutuzov M.A."/>
        </authorList>
    </citation>
    <scope>MUTAGENESIS OF 207-PRO--LEU-231 AND 369-PRO--SER-413</scope>
    <scope>SUBCELLULAR LOCATION</scope>
</reference>
<reference key="10">
    <citation type="journal article" date="2003" name="Plant Cell">
        <title>PP7 is a positive regulator of blue light signaling in Arabidopsis.</title>
        <authorList>
            <person name="Moeller S.G."/>
            <person name="Kim Y.-S."/>
            <person name="Kunkel T."/>
            <person name="Chua N.-H."/>
        </authorList>
    </citation>
    <scope>FUNCTION</scope>
    <scope>TISSUE SPECIFICITY</scope>
</reference>
<reference key="11">
    <citation type="journal article" date="2007" name="Plant Cell Environ.">
        <title>Calmodulin-binding protein phosphatase PP7 is involved in thermotolerance in Arabidopsis.</title>
        <authorList>
            <person name="Liu H.-T."/>
            <person name="Li G.-L."/>
            <person name="Chang H."/>
            <person name="Sun D.-Y."/>
            <person name="Zhou R.-G."/>
            <person name="Li B."/>
        </authorList>
    </citation>
    <scope>FUNCTION</scope>
    <scope>INTERACTION WITH CALMODULIN AND HSFA1A</scope>
    <scope>INDUCTION BY HEAT SHOCK</scope>
</reference>
<reference key="12">
    <citation type="journal article" date="2007" name="Trends Plant Sci.">
        <title>Arabidopsis PPP family of serine/threonine phosphatases.</title>
        <authorList>
            <person name="Farkas I."/>
            <person name="Dombradi V."/>
            <person name="Miskei M."/>
            <person name="Szabados L."/>
            <person name="Koncz C."/>
        </authorList>
    </citation>
    <scope>GENE FAMILY</scope>
    <scope>NOMENCLATURE</scope>
</reference>
<proteinExistence type="evidence at protein level"/>
<feature type="chain" id="PRO_0000308991" description="Serine/threonine-protein phosphatase 7">
    <location>
        <begin position="1"/>
        <end position="413"/>
    </location>
</feature>
<feature type="region of interest" description="Disordered" evidence="2">
    <location>
        <begin position="391"/>
        <end position="413"/>
    </location>
</feature>
<feature type="compositionally biased region" description="Polar residues" evidence="2">
    <location>
        <begin position="404"/>
        <end position="413"/>
    </location>
</feature>
<feature type="active site" description="Proton donor" evidence="1">
    <location>
        <position position="146"/>
    </location>
</feature>
<feature type="binding site" evidence="1">
    <location>
        <position position="84"/>
    </location>
    <ligand>
        <name>Mn(2+)</name>
        <dbReference type="ChEBI" id="CHEBI:29035"/>
        <label>1</label>
    </ligand>
</feature>
<feature type="binding site" evidence="1">
    <location>
        <position position="86"/>
    </location>
    <ligand>
        <name>Mn(2+)</name>
        <dbReference type="ChEBI" id="CHEBI:29035"/>
        <label>1</label>
    </ligand>
</feature>
<feature type="binding site" evidence="1">
    <location>
        <position position="113"/>
    </location>
    <ligand>
        <name>Mn(2+)</name>
        <dbReference type="ChEBI" id="CHEBI:29035"/>
        <label>1</label>
    </ligand>
</feature>
<feature type="binding site" evidence="1">
    <location>
        <position position="113"/>
    </location>
    <ligand>
        <name>Mn(2+)</name>
        <dbReference type="ChEBI" id="CHEBI:29035"/>
        <label>2</label>
    </ligand>
</feature>
<feature type="binding site" evidence="1">
    <location>
        <position position="145"/>
    </location>
    <ligand>
        <name>Mn(2+)</name>
        <dbReference type="ChEBI" id="CHEBI:29035"/>
        <label>2</label>
    </ligand>
</feature>
<feature type="binding site" evidence="1">
    <location>
        <position position="197"/>
    </location>
    <ligand>
        <name>Mn(2+)</name>
        <dbReference type="ChEBI" id="CHEBI:29035"/>
        <label>2</label>
    </ligand>
</feature>
<feature type="binding site" evidence="1">
    <location>
        <position position="303"/>
    </location>
    <ligand>
        <name>Mn(2+)</name>
        <dbReference type="ChEBI" id="CHEBI:29035"/>
        <label>2</label>
    </ligand>
</feature>
<feature type="disulfide bond" evidence="12">
    <location>
        <begin position="28"/>
        <end position="67"/>
    </location>
</feature>
<feature type="splice variant" id="VSP_029088" description="In isoform 2." evidence="10">
    <original>LIIR</original>
    <variation>VTPK</variation>
    <location>
        <begin position="298"/>
        <end position="301"/>
    </location>
</feature>
<feature type="splice variant" id="VSP_029089" description="In isoform 2." evidence="10">
    <location>
        <begin position="302"/>
        <end position="413"/>
    </location>
</feature>
<feature type="mutagenesis site" description="Normal subcellular location." evidence="4">
    <original>PKRTTRGKKNRRVVLLEPEPSSMKL</original>
    <variation>GGGGGGGGGGGGGGGGGGGGGGGGG</variation>
    <location>
        <begin position="207"/>
        <end position="231"/>
    </location>
</feature>
<feature type="mutagenesis site" description="Reduced activity, but enhanced inducibility by polylysine with pNPP as substrate; reduced binding with calmodulin." evidence="6">
    <location>
        <begin position="209"/>
        <end position="231"/>
    </location>
</feature>
<feature type="mutagenesis site" description="Loss of activity; normal binding with calmodulin; cytoplasmic instead of nuclear subcellular location." evidence="4 6">
    <location>
        <begin position="369"/>
        <end position="413"/>
    </location>
</feature>
<feature type="sequence conflict" description="In Ref. 1; CAA03886." evidence="11" ref="1">
    <original>M</original>
    <variation>I</variation>
    <location>
        <position position="266"/>
    </location>
</feature>
<accession>Q9FN02</accession>
<accession>O49346</accession>
<accession>Q3E865</accession>
<sequence>METVPPSPITWPDGGALTNDWVHGLMSCFEWSSWNLPPSQLPSLLPVNVFDSLVLTAHKILHKERNCVHIDDLDSVSNVVVVGDIHGQLHDLLFLLKDTGFPCQNRCYVFNGDYVDRGAWGLETFLVLLSWKVLMPDRVYLLRGNHESKYCTSMYGFEKEVLTKYGDKGKHVYRKCLGCFEGLPLASIISGRVYTAHGGLFRSPVLPKRTTRGKKNRRVVLLEPEPSSMKLGTLDELMQARRSVLDPPWEGSNLIPGDVLWSDPSMTPGLSPNEQRGIGLLWGPDCTEDFLKKYELKLIIRSHEGPDAREKRTGLGGMDNGYTIDHNVESGKLITIFSAPDYPQFQATEERYKNKGAYIILQAPDFSDPQFHSFEAVKPRPKAHPYYDFENVIDSDDEMDKSAMDTNNEQPNS</sequence>